<keyword id="KW-0007">Acetylation</keyword>
<keyword id="KW-0148">Chlorophyll</keyword>
<keyword id="KW-0150">Chloroplast</keyword>
<keyword id="KW-0157">Chromophore</keyword>
<keyword id="KW-0464">Manganese</keyword>
<keyword id="KW-0472">Membrane</keyword>
<keyword id="KW-0479">Metal-binding</keyword>
<keyword id="KW-0597">Phosphoprotein</keyword>
<keyword id="KW-0602">Photosynthesis</keyword>
<keyword id="KW-0604">Photosystem II</keyword>
<keyword id="KW-0934">Plastid</keyword>
<keyword id="KW-0793">Thylakoid</keyword>
<keyword id="KW-0812">Transmembrane</keyword>
<keyword id="KW-1133">Transmembrane helix</keyword>
<feature type="propeptide" id="PRO_0000431205" evidence="1">
    <location>
        <begin position="1"/>
        <end position="14"/>
    </location>
</feature>
<feature type="chain" id="PRO_0000226927" description="Photosystem II CP43 reaction center protein" evidence="1">
    <location>
        <begin position="15"/>
        <end position="473"/>
    </location>
</feature>
<feature type="transmembrane region" description="Helical" evidence="1">
    <location>
        <begin position="69"/>
        <end position="93"/>
    </location>
</feature>
<feature type="transmembrane region" description="Helical" evidence="1">
    <location>
        <begin position="134"/>
        <end position="155"/>
    </location>
</feature>
<feature type="transmembrane region" description="Helical" evidence="1">
    <location>
        <begin position="178"/>
        <end position="200"/>
    </location>
</feature>
<feature type="transmembrane region" description="Helical" evidence="1">
    <location>
        <begin position="255"/>
        <end position="275"/>
    </location>
</feature>
<feature type="transmembrane region" description="Helical" evidence="1">
    <location>
        <begin position="291"/>
        <end position="312"/>
    </location>
</feature>
<feature type="transmembrane region" description="Helical" evidence="1">
    <location>
        <begin position="447"/>
        <end position="471"/>
    </location>
</feature>
<feature type="binding site" evidence="1">
    <location>
        <position position="367"/>
    </location>
    <ligand>
        <name>[CaMn4O5] cluster</name>
        <dbReference type="ChEBI" id="CHEBI:189552"/>
    </ligand>
</feature>
<feature type="modified residue" description="N-acetylthreonine" evidence="1">
    <location>
        <position position="15"/>
    </location>
</feature>
<feature type="modified residue" description="Phosphothreonine" evidence="1">
    <location>
        <position position="15"/>
    </location>
</feature>
<dbReference type="EMBL" id="AP006714">
    <property type="protein sequence ID" value="BAD27277.1"/>
    <property type="molecule type" value="Genomic_DNA"/>
</dbReference>
<dbReference type="SMR" id="Q6ENY0"/>
<dbReference type="GO" id="GO:0009535">
    <property type="term" value="C:chloroplast thylakoid membrane"/>
    <property type="evidence" value="ECO:0007669"/>
    <property type="project" value="UniProtKB-SubCell"/>
</dbReference>
<dbReference type="GO" id="GO:0009523">
    <property type="term" value="C:photosystem II"/>
    <property type="evidence" value="ECO:0007669"/>
    <property type="project" value="UniProtKB-KW"/>
</dbReference>
<dbReference type="GO" id="GO:0016168">
    <property type="term" value="F:chlorophyll binding"/>
    <property type="evidence" value="ECO:0007669"/>
    <property type="project" value="UniProtKB-UniRule"/>
</dbReference>
<dbReference type="GO" id="GO:0045156">
    <property type="term" value="F:electron transporter, transferring electrons within the cyclic electron transport pathway of photosynthesis activity"/>
    <property type="evidence" value="ECO:0007669"/>
    <property type="project" value="InterPro"/>
</dbReference>
<dbReference type="GO" id="GO:0046872">
    <property type="term" value="F:metal ion binding"/>
    <property type="evidence" value="ECO:0007669"/>
    <property type="project" value="UniProtKB-KW"/>
</dbReference>
<dbReference type="GO" id="GO:0009772">
    <property type="term" value="P:photosynthetic electron transport in photosystem II"/>
    <property type="evidence" value="ECO:0007669"/>
    <property type="project" value="InterPro"/>
</dbReference>
<dbReference type="FunFam" id="1.10.10.670:FF:000001">
    <property type="entry name" value="Photosystem II CP43 reaction center protein"/>
    <property type="match status" value="1"/>
</dbReference>
<dbReference type="Gene3D" id="1.10.10.670">
    <property type="entry name" value="photosystem ii from thermosynechococcus elongatus"/>
    <property type="match status" value="1"/>
</dbReference>
<dbReference type="HAMAP" id="MF_01496">
    <property type="entry name" value="PSII_PsbC_CP43"/>
    <property type="match status" value="1"/>
</dbReference>
<dbReference type="InterPro" id="IPR000932">
    <property type="entry name" value="PS_antenna-like"/>
</dbReference>
<dbReference type="InterPro" id="IPR036001">
    <property type="entry name" value="PS_II_antenna-like_sf"/>
</dbReference>
<dbReference type="InterPro" id="IPR005869">
    <property type="entry name" value="PSII_PsbC"/>
</dbReference>
<dbReference type="InterPro" id="IPR044900">
    <property type="entry name" value="PSII_PsbC_sf"/>
</dbReference>
<dbReference type="NCBIfam" id="TIGR01153">
    <property type="entry name" value="psbC"/>
    <property type="match status" value="1"/>
</dbReference>
<dbReference type="Pfam" id="PF00421">
    <property type="entry name" value="PSII"/>
    <property type="match status" value="1"/>
</dbReference>
<dbReference type="SUPFAM" id="SSF161077">
    <property type="entry name" value="Photosystem II antenna protein-like"/>
    <property type="match status" value="1"/>
</dbReference>
<evidence type="ECO:0000255" key="1">
    <source>
        <dbReference type="HAMAP-Rule" id="MF_01496"/>
    </source>
</evidence>
<gene>
    <name evidence="1" type="primary">psbC</name>
</gene>
<sequence>MKILYSLRRFYHVETLFNGTFVLAGRDQETTGFAWWAGNARLINLSGKLLGAHVAHAGLIVFWAGAMNLFEVAHFVPEKPMYEQGLILLPHLATLGWGVGPGGEVLDTFPYFVSGVLHLISSAVLGFGGIYHALLGPETLEESFPFFGYVWKDRNKMTTILGIHLILLGLGAFLLVLKALYFGGVYDTWAPGGGDVRKITNLTLSPGVIFGYLLKSPFGGEGWIVSVDDLEDIIGGHVWLGSICVLGGIWHILTKPFAWARRAFVWSGEAYLSYSLAALSVFGFIACCFVWFNNTAYPSEFYGPTGPEASQAQAFTFLVRDQRLGANVGSAQGPTGLGKYLMRSPTGEVIFGGETMRFWDLRAPWLEPLRGPNGLDLSRLKKDIQPWQERRSAEYMTHAPLGSLNSVGGVATEINAVNYVSPRSWLATSHFVLGFFFFVGHLWHAGRARAAAAGFEKGIDRDLEPVLYMTPLN</sequence>
<reference key="1">
    <citation type="journal article" date="2004" name="DNA Res.">
        <title>Complete nucleotide sequence of the sugarcane (Saccharum officinarum) chloroplast genome: a comparative analysis of four monocot chloroplast genomes.</title>
        <authorList>
            <person name="Asano T."/>
            <person name="Tsudzuki T."/>
            <person name="Takahashi S."/>
            <person name="Shimada H."/>
            <person name="Kadowaki K."/>
        </authorList>
    </citation>
    <scope>NUCLEOTIDE SEQUENCE [LARGE SCALE GENOMIC DNA]</scope>
</reference>
<protein>
    <recommendedName>
        <fullName evidence="1">Photosystem II CP43 reaction center protein</fullName>
    </recommendedName>
    <alternativeName>
        <fullName evidence="1">PSII 43 kDa protein</fullName>
    </alternativeName>
    <alternativeName>
        <fullName evidence="1">Protein CP-43</fullName>
    </alternativeName>
</protein>
<organism>
    <name type="scientific">Saccharum officinarum</name>
    <name type="common">Sugarcane</name>
    <dbReference type="NCBI Taxonomy" id="4547"/>
    <lineage>
        <taxon>Eukaryota</taxon>
        <taxon>Viridiplantae</taxon>
        <taxon>Streptophyta</taxon>
        <taxon>Embryophyta</taxon>
        <taxon>Tracheophyta</taxon>
        <taxon>Spermatophyta</taxon>
        <taxon>Magnoliopsida</taxon>
        <taxon>Liliopsida</taxon>
        <taxon>Poales</taxon>
        <taxon>Poaceae</taxon>
        <taxon>PACMAD clade</taxon>
        <taxon>Panicoideae</taxon>
        <taxon>Andropogonodae</taxon>
        <taxon>Andropogoneae</taxon>
        <taxon>Saccharinae</taxon>
        <taxon>Saccharum</taxon>
        <taxon>Saccharum officinarum species complex</taxon>
    </lineage>
</organism>
<accession>Q6ENY0</accession>
<name>PSBC_SACOF</name>
<comment type="function">
    <text evidence="1">One of the components of the core complex of photosystem II (PSII). It binds chlorophyll and helps catalyze the primary light-induced photochemical processes of PSII. PSII is a light-driven water:plastoquinone oxidoreductase, using light energy to abstract electrons from H(2)O, generating O(2) and a proton gradient subsequently used for ATP formation.</text>
</comment>
<comment type="cofactor">
    <text evidence="1">Binds multiple chlorophylls and provides some of the ligands for the Ca-4Mn-5O cluster of the oxygen-evolving complex. It may also provide a ligand for a Cl- that is required for oxygen evolution. PSII binds additional chlorophylls, carotenoids and specific lipids.</text>
</comment>
<comment type="subunit">
    <text evidence="1">PSII is composed of 1 copy each of membrane proteins PsbA, PsbB, PsbC, PsbD, PsbE, PsbF, PsbH, PsbI, PsbJ, PsbK, PsbL, PsbM, PsbT, PsbX, PsbY, PsbZ, Psb30/Ycf12, at least 3 peripheral proteins of the oxygen-evolving complex and a large number of cofactors. It forms dimeric complexes.</text>
</comment>
<comment type="subcellular location">
    <subcellularLocation>
        <location evidence="1">Plastid</location>
        <location evidence="1">Chloroplast thylakoid membrane</location>
        <topology evidence="1">Multi-pass membrane protein</topology>
    </subcellularLocation>
</comment>
<comment type="similarity">
    <text evidence="1">Belongs to the PsbB/PsbC family. PsbC subfamily.</text>
</comment>
<proteinExistence type="inferred from homology"/>
<geneLocation type="chloroplast"/>